<gene>
    <name evidence="1" type="primary">hemA</name>
    <name type="ordered locus">Sfri_0722</name>
</gene>
<comment type="function">
    <text evidence="1">Catalyzes the NADPH-dependent reduction of glutamyl-tRNA(Glu) to glutamate 1-semialdehyde (GSA).</text>
</comment>
<comment type="catalytic activity">
    <reaction evidence="1">
        <text>(S)-4-amino-5-oxopentanoate + tRNA(Glu) + NADP(+) = L-glutamyl-tRNA(Glu) + NADPH + H(+)</text>
        <dbReference type="Rhea" id="RHEA:12344"/>
        <dbReference type="Rhea" id="RHEA-COMP:9663"/>
        <dbReference type="Rhea" id="RHEA-COMP:9680"/>
        <dbReference type="ChEBI" id="CHEBI:15378"/>
        <dbReference type="ChEBI" id="CHEBI:57501"/>
        <dbReference type="ChEBI" id="CHEBI:57783"/>
        <dbReference type="ChEBI" id="CHEBI:58349"/>
        <dbReference type="ChEBI" id="CHEBI:78442"/>
        <dbReference type="ChEBI" id="CHEBI:78520"/>
        <dbReference type="EC" id="1.2.1.70"/>
    </reaction>
</comment>
<comment type="pathway">
    <text evidence="1">Porphyrin-containing compound metabolism; protoporphyrin-IX biosynthesis; 5-aminolevulinate from L-glutamyl-tRNA(Glu): step 1/2.</text>
</comment>
<comment type="subunit">
    <text evidence="1">Homodimer.</text>
</comment>
<comment type="domain">
    <text evidence="1">Possesses an unusual extended V-shaped dimeric structure with each monomer consisting of three distinct domains arranged along a curved 'spinal' alpha-helix. The N-terminal catalytic domain specifically recognizes the glutamate moiety of the substrate. The second domain is the NADPH-binding domain, and the third C-terminal domain is responsible for dimerization.</text>
</comment>
<comment type="miscellaneous">
    <text evidence="1">During catalysis, the active site Cys acts as a nucleophile attacking the alpha-carbonyl group of tRNA-bound glutamate with the formation of a thioester intermediate between enzyme and glutamate, and the concomitant release of tRNA(Glu). The thioester intermediate is finally reduced by direct hydride transfer from NADPH, to form the product GSA.</text>
</comment>
<comment type="similarity">
    <text evidence="1">Belongs to the glutamyl-tRNA reductase family.</text>
</comment>
<proteinExistence type="inferred from homology"/>
<reference key="1">
    <citation type="submission" date="2006-08" db="EMBL/GenBank/DDBJ databases">
        <title>Complete sequence of Shewanella frigidimarina NCIMB 400.</title>
        <authorList>
            <consortium name="US DOE Joint Genome Institute"/>
            <person name="Copeland A."/>
            <person name="Lucas S."/>
            <person name="Lapidus A."/>
            <person name="Barry K."/>
            <person name="Detter J.C."/>
            <person name="Glavina del Rio T."/>
            <person name="Hammon N."/>
            <person name="Israni S."/>
            <person name="Dalin E."/>
            <person name="Tice H."/>
            <person name="Pitluck S."/>
            <person name="Fredrickson J.K."/>
            <person name="Kolker E."/>
            <person name="McCuel L.A."/>
            <person name="DiChristina T."/>
            <person name="Nealson K.H."/>
            <person name="Newman D."/>
            <person name="Tiedje J.M."/>
            <person name="Zhou J."/>
            <person name="Romine M.F."/>
            <person name="Culley D.E."/>
            <person name="Serres M."/>
            <person name="Chertkov O."/>
            <person name="Brettin T."/>
            <person name="Bruce D."/>
            <person name="Han C."/>
            <person name="Tapia R."/>
            <person name="Gilna P."/>
            <person name="Schmutz J."/>
            <person name="Larimer F."/>
            <person name="Land M."/>
            <person name="Hauser L."/>
            <person name="Kyrpides N."/>
            <person name="Mikhailova N."/>
            <person name="Richardson P."/>
        </authorList>
    </citation>
    <scope>NUCLEOTIDE SEQUENCE [LARGE SCALE GENOMIC DNA]</scope>
    <source>
        <strain>NCIMB 400</strain>
    </source>
</reference>
<evidence type="ECO:0000255" key="1">
    <source>
        <dbReference type="HAMAP-Rule" id="MF_00087"/>
    </source>
</evidence>
<keyword id="KW-0521">NADP</keyword>
<keyword id="KW-0560">Oxidoreductase</keyword>
<keyword id="KW-0627">Porphyrin biosynthesis</keyword>
<keyword id="KW-1185">Reference proteome</keyword>
<accession>Q087I5</accession>
<feature type="chain" id="PRO_1000004689" description="Glutamyl-tRNA reductase">
    <location>
        <begin position="1"/>
        <end position="416"/>
    </location>
</feature>
<feature type="active site" description="Nucleophile" evidence="1">
    <location>
        <position position="50"/>
    </location>
</feature>
<feature type="binding site" evidence="1">
    <location>
        <begin position="49"/>
        <end position="52"/>
    </location>
    <ligand>
        <name>substrate</name>
    </ligand>
</feature>
<feature type="binding site" evidence="1">
    <location>
        <position position="105"/>
    </location>
    <ligand>
        <name>substrate</name>
    </ligand>
</feature>
<feature type="binding site" evidence="1">
    <location>
        <begin position="110"/>
        <end position="112"/>
    </location>
    <ligand>
        <name>substrate</name>
    </ligand>
</feature>
<feature type="binding site" evidence="1">
    <location>
        <position position="116"/>
    </location>
    <ligand>
        <name>substrate</name>
    </ligand>
</feature>
<feature type="binding site" evidence="1">
    <location>
        <begin position="185"/>
        <end position="190"/>
    </location>
    <ligand>
        <name>NADP(+)</name>
        <dbReference type="ChEBI" id="CHEBI:58349"/>
    </ligand>
</feature>
<feature type="site" description="Important for activity" evidence="1">
    <location>
        <position position="95"/>
    </location>
</feature>
<dbReference type="EC" id="1.2.1.70" evidence="1"/>
<dbReference type="EMBL" id="CP000447">
    <property type="protein sequence ID" value="ABI70580.1"/>
    <property type="molecule type" value="Genomic_DNA"/>
</dbReference>
<dbReference type="RefSeq" id="WP_011636205.1">
    <property type="nucleotide sequence ID" value="NC_008345.1"/>
</dbReference>
<dbReference type="SMR" id="Q087I5"/>
<dbReference type="STRING" id="318167.Sfri_0722"/>
<dbReference type="KEGG" id="sfr:Sfri_0722"/>
<dbReference type="eggNOG" id="COG0373">
    <property type="taxonomic scope" value="Bacteria"/>
</dbReference>
<dbReference type="HOGENOM" id="CLU_035113_2_2_6"/>
<dbReference type="OrthoDB" id="110209at2"/>
<dbReference type="UniPathway" id="UPA00251">
    <property type="reaction ID" value="UER00316"/>
</dbReference>
<dbReference type="Proteomes" id="UP000000684">
    <property type="component" value="Chromosome"/>
</dbReference>
<dbReference type="GO" id="GO:0008883">
    <property type="term" value="F:glutamyl-tRNA reductase activity"/>
    <property type="evidence" value="ECO:0007669"/>
    <property type="project" value="UniProtKB-UniRule"/>
</dbReference>
<dbReference type="GO" id="GO:0050661">
    <property type="term" value="F:NADP binding"/>
    <property type="evidence" value="ECO:0007669"/>
    <property type="project" value="InterPro"/>
</dbReference>
<dbReference type="GO" id="GO:0019353">
    <property type="term" value="P:protoporphyrinogen IX biosynthetic process from glutamate"/>
    <property type="evidence" value="ECO:0007669"/>
    <property type="project" value="TreeGrafter"/>
</dbReference>
<dbReference type="CDD" id="cd05213">
    <property type="entry name" value="NAD_bind_Glutamyl_tRNA_reduct"/>
    <property type="match status" value="1"/>
</dbReference>
<dbReference type="FunFam" id="3.30.460.30:FF:000001">
    <property type="entry name" value="Glutamyl-tRNA reductase"/>
    <property type="match status" value="1"/>
</dbReference>
<dbReference type="FunFam" id="3.40.50.720:FF:000031">
    <property type="entry name" value="Glutamyl-tRNA reductase"/>
    <property type="match status" value="1"/>
</dbReference>
<dbReference type="Gene3D" id="3.30.460.30">
    <property type="entry name" value="Glutamyl-tRNA reductase, N-terminal domain"/>
    <property type="match status" value="1"/>
</dbReference>
<dbReference type="Gene3D" id="3.40.50.720">
    <property type="entry name" value="NAD(P)-binding Rossmann-like Domain"/>
    <property type="match status" value="1"/>
</dbReference>
<dbReference type="HAMAP" id="MF_00087">
    <property type="entry name" value="Glu_tRNA_reductase"/>
    <property type="match status" value="1"/>
</dbReference>
<dbReference type="InterPro" id="IPR000343">
    <property type="entry name" value="4pyrrol_synth_GluRdtase"/>
</dbReference>
<dbReference type="InterPro" id="IPR015896">
    <property type="entry name" value="4pyrrol_synth_GluRdtase_dimer"/>
</dbReference>
<dbReference type="InterPro" id="IPR015895">
    <property type="entry name" value="4pyrrol_synth_GluRdtase_N"/>
</dbReference>
<dbReference type="InterPro" id="IPR018214">
    <property type="entry name" value="GluRdtase_CS"/>
</dbReference>
<dbReference type="InterPro" id="IPR036453">
    <property type="entry name" value="GluRdtase_dimer_dom_sf"/>
</dbReference>
<dbReference type="InterPro" id="IPR036343">
    <property type="entry name" value="GluRdtase_N_sf"/>
</dbReference>
<dbReference type="InterPro" id="IPR036291">
    <property type="entry name" value="NAD(P)-bd_dom_sf"/>
</dbReference>
<dbReference type="InterPro" id="IPR006151">
    <property type="entry name" value="Shikm_DH/Glu-tRNA_Rdtase"/>
</dbReference>
<dbReference type="NCBIfam" id="TIGR01035">
    <property type="entry name" value="hemA"/>
    <property type="match status" value="1"/>
</dbReference>
<dbReference type="PANTHER" id="PTHR43013">
    <property type="entry name" value="GLUTAMYL-TRNA REDUCTASE"/>
    <property type="match status" value="1"/>
</dbReference>
<dbReference type="PANTHER" id="PTHR43013:SF1">
    <property type="entry name" value="GLUTAMYL-TRNA REDUCTASE"/>
    <property type="match status" value="1"/>
</dbReference>
<dbReference type="Pfam" id="PF00745">
    <property type="entry name" value="GlutR_dimer"/>
    <property type="match status" value="1"/>
</dbReference>
<dbReference type="Pfam" id="PF05201">
    <property type="entry name" value="GlutR_N"/>
    <property type="match status" value="1"/>
</dbReference>
<dbReference type="Pfam" id="PF01488">
    <property type="entry name" value="Shikimate_DH"/>
    <property type="match status" value="1"/>
</dbReference>
<dbReference type="PIRSF" id="PIRSF000445">
    <property type="entry name" value="4pyrrol_synth_GluRdtase"/>
    <property type="match status" value="1"/>
</dbReference>
<dbReference type="SUPFAM" id="SSF69742">
    <property type="entry name" value="Glutamyl tRNA-reductase catalytic, N-terminal domain"/>
    <property type="match status" value="1"/>
</dbReference>
<dbReference type="SUPFAM" id="SSF69075">
    <property type="entry name" value="Glutamyl tRNA-reductase dimerization domain"/>
    <property type="match status" value="1"/>
</dbReference>
<dbReference type="SUPFAM" id="SSF51735">
    <property type="entry name" value="NAD(P)-binding Rossmann-fold domains"/>
    <property type="match status" value="1"/>
</dbReference>
<dbReference type="PROSITE" id="PS00747">
    <property type="entry name" value="GLUTR"/>
    <property type="match status" value="1"/>
</dbReference>
<name>HEM1_SHEFN</name>
<sequence length="416" mass="45843">MSLVIIGINHKTATVDLREKVAFSPDRIHDAMKSLASRTRTGEAVIVSTCNRTELYCNNAEKEDIIEWLEDYHGLDHNDLMPCIYAYEEQVAVKHLMRVASGLDSLVLGEPQILGQVKQAFVKAKEAGTIALTIDRLFQNTFSVAKKVRTDTEIGAAAVSVAFAAVSMAKHIFSSLSTTKVLLIGAGETIELVAKHLKDNGVASMVVANRTIERAQAMCEEFNATAITLEQIPDFLPKADIVISSTASPLPILGKGMVEKALKQRRHQPMLLVDIAVPRDIEAEVGELDDAFLYTVDDLHSIIEQNMASRKEAAEQAELITEDQSHIFMEWIRSLESVDSIREYRSQSLAIKDELVERALNKLSQGSDSEQVILELANRLTNRLIHSPTQALTSASRQGDLNTLGQLRSALGLDKN</sequence>
<organism>
    <name type="scientific">Shewanella frigidimarina (strain NCIMB 400)</name>
    <dbReference type="NCBI Taxonomy" id="318167"/>
    <lineage>
        <taxon>Bacteria</taxon>
        <taxon>Pseudomonadati</taxon>
        <taxon>Pseudomonadota</taxon>
        <taxon>Gammaproteobacteria</taxon>
        <taxon>Alteromonadales</taxon>
        <taxon>Shewanellaceae</taxon>
        <taxon>Shewanella</taxon>
    </lineage>
</organism>
<protein>
    <recommendedName>
        <fullName evidence="1">Glutamyl-tRNA reductase</fullName>
        <shortName evidence="1">GluTR</shortName>
        <ecNumber evidence="1">1.2.1.70</ecNumber>
    </recommendedName>
</protein>